<dbReference type="EMBL" id="CP000786">
    <property type="protein sequence ID" value="ABZ98062.1"/>
    <property type="molecule type" value="Genomic_DNA"/>
</dbReference>
<dbReference type="SMR" id="B0SSH2"/>
<dbReference type="STRING" id="456481.LEPBI_I1959"/>
<dbReference type="KEGG" id="lbi:LEPBI_I1959"/>
<dbReference type="HOGENOM" id="CLU_083987_3_3_12"/>
<dbReference type="Proteomes" id="UP000001847">
    <property type="component" value="Chromosome I"/>
</dbReference>
<dbReference type="GO" id="GO:0022625">
    <property type="term" value="C:cytosolic large ribosomal subunit"/>
    <property type="evidence" value="ECO:0007669"/>
    <property type="project" value="TreeGrafter"/>
</dbReference>
<dbReference type="GO" id="GO:0019843">
    <property type="term" value="F:rRNA binding"/>
    <property type="evidence" value="ECO:0007669"/>
    <property type="project" value="UniProtKB-UniRule"/>
</dbReference>
<dbReference type="GO" id="GO:0003735">
    <property type="term" value="F:structural constituent of ribosome"/>
    <property type="evidence" value="ECO:0007669"/>
    <property type="project" value="InterPro"/>
</dbReference>
<dbReference type="GO" id="GO:0006412">
    <property type="term" value="P:translation"/>
    <property type="evidence" value="ECO:0007669"/>
    <property type="project" value="UniProtKB-UniRule"/>
</dbReference>
<dbReference type="CDD" id="cd00336">
    <property type="entry name" value="Ribosomal_L22"/>
    <property type="match status" value="1"/>
</dbReference>
<dbReference type="Gene3D" id="3.90.470.10">
    <property type="entry name" value="Ribosomal protein L22/L17"/>
    <property type="match status" value="1"/>
</dbReference>
<dbReference type="HAMAP" id="MF_01331_B">
    <property type="entry name" value="Ribosomal_uL22_B"/>
    <property type="match status" value="1"/>
</dbReference>
<dbReference type="InterPro" id="IPR001063">
    <property type="entry name" value="Ribosomal_uL22"/>
</dbReference>
<dbReference type="InterPro" id="IPR005727">
    <property type="entry name" value="Ribosomal_uL22_bac/chlpt-type"/>
</dbReference>
<dbReference type="InterPro" id="IPR047867">
    <property type="entry name" value="Ribosomal_uL22_bac/org-type"/>
</dbReference>
<dbReference type="InterPro" id="IPR018260">
    <property type="entry name" value="Ribosomal_uL22_CS"/>
</dbReference>
<dbReference type="InterPro" id="IPR036394">
    <property type="entry name" value="Ribosomal_uL22_sf"/>
</dbReference>
<dbReference type="NCBIfam" id="TIGR01044">
    <property type="entry name" value="rplV_bact"/>
    <property type="match status" value="1"/>
</dbReference>
<dbReference type="PANTHER" id="PTHR13501">
    <property type="entry name" value="CHLOROPLAST 50S RIBOSOMAL PROTEIN L22-RELATED"/>
    <property type="match status" value="1"/>
</dbReference>
<dbReference type="PANTHER" id="PTHR13501:SF8">
    <property type="entry name" value="LARGE RIBOSOMAL SUBUNIT PROTEIN UL22M"/>
    <property type="match status" value="1"/>
</dbReference>
<dbReference type="Pfam" id="PF00237">
    <property type="entry name" value="Ribosomal_L22"/>
    <property type="match status" value="1"/>
</dbReference>
<dbReference type="SUPFAM" id="SSF54843">
    <property type="entry name" value="Ribosomal protein L22"/>
    <property type="match status" value="1"/>
</dbReference>
<dbReference type="PROSITE" id="PS00464">
    <property type="entry name" value="RIBOSOMAL_L22"/>
    <property type="match status" value="1"/>
</dbReference>
<feature type="chain" id="PRO_0000354481" description="Large ribosomal subunit protein uL22">
    <location>
        <begin position="1"/>
        <end position="117"/>
    </location>
</feature>
<reference key="1">
    <citation type="journal article" date="2008" name="PLoS ONE">
        <title>Genome sequence of the saprophyte Leptospira biflexa provides insights into the evolution of Leptospira and the pathogenesis of leptospirosis.</title>
        <authorList>
            <person name="Picardeau M."/>
            <person name="Bulach D.M."/>
            <person name="Bouchier C."/>
            <person name="Zuerner R.L."/>
            <person name="Zidane N."/>
            <person name="Wilson P.J."/>
            <person name="Creno S."/>
            <person name="Kuczek E.S."/>
            <person name="Bommezzadri S."/>
            <person name="Davis J.C."/>
            <person name="McGrath A."/>
            <person name="Johnson M.J."/>
            <person name="Boursaux-Eude C."/>
            <person name="Seemann T."/>
            <person name="Rouy Z."/>
            <person name="Coppel R.L."/>
            <person name="Rood J.I."/>
            <person name="Lajus A."/>
            <person name="Davies J.K."/>
            <person name="Medigue C."/>
            <person name="Adler B."/>
        </authorList>
    </citation>
    <scope>NUCLEOTIDE SEQUENCE [LARGE SCALE GENOMIC DNA]</scope>
    <source>
        <strain>Patoc 1 / ATCC 23582 / Paris</strain>
    </source>
</reference>
<keyword id="KW-1185">Reference proteome</keyword>
<keyword id="KW-0687">Ribonucleoprotein</keyword>
<keyword id="KW-0689">Ribosomal protein</keyword>
<keyword id="KW-0694">RNA-binding</keyword>
<keyword id="KW-0699">rRNA-binding</keyword>
<protein>
    <recommendedName>
        <fullName evidence="1">Large ribosomal subunit protein uL22</fullName>
    </recommendedName>
    <alternativeName>
        <fullName evidence="2">50S ribosomal protein L22</fullName>
    </alternativeName>
</protein>
<proteinExistence type="inferred from homology"/>
<accession>B0SSH2</accession>
<organism>
    <name type="scientific">Leptospira biflexa serovar Patoc (strain Patoc 1 / ATCC 23582 / Paris)</name>
    <dbReference type="NCBI Taxonomy" id="456481"/>
    <lineage>
        <taxon>Bacteria</taxon>
        <taxon>Pseudomonadati</taxon>
        <taxon>Spirochaetota</taxon>
        <taxon>Spirochaetia</taxon>
        <taxon>Leptospirales</taxon>
        <taxon>Leptospiraceae</taxon>
        <taxon>Leptospira</taxon>
    </lineage>
</organism>
<name>RL22_LEPBP</name>
<sequence length="117" mass="13256">MMEAKAVGKHLRISARKARLVADEVRGYDYKEAIDILRFTNKAASSMIINLLNSAVANAIQMNESLDPNSLFVKKIYVDDGPIMKRFRPRARGRASRIRKRLSHITVVVSEIEKKVS</sequence>
<gene>
    <name evidence="1" type="primary">rplV</name>
    <name type="ordered locus">LEPBI_I1959</name>
</gene>
<evidence type="ECO:0000255" key="1">
    <source>
        <dbReference type="HAMAP-Rule" id="MF_01331"/>
    </source>
</evidence>
<evidence type="ECO:0000305" key="2"/>
<comment type="function">
    <text evidence="1">This protein binds specifically to 23S rRNA; its binding is stimulated by other ribosomal proteins, e.g. L4, L17, and L20. It is important during the early stages of 50S assembly. It makes multiple contacts with different domains of the 23S rRNA in the assembled 50S subunit and ribosome (By similarity).</text>
</comment>
<comment type="function">
    <text evidence="1">The globular domain of the protein is located near the polypeptide exit tunnel on the outside of the subunit, while an extended beta-hairpin is found that lines the wall of the exit tunnel in the center of the 70S ribosome.</text>
</comment>
<comment type="subunit">
    <text evidence="1">Part of the 50S ribosomal subunit.</text>
</comment>
<comment type="similarity">
    <text evidence="1">Belongs to the universal ribosomal protein uL22 family.</text>
</comment>